<name>RL20_BORBR</name>
<proteinExistence type="inferred from homology"/>
<evidence type="ECO:0000255" key="1">
    <source>
        <dbReference type="HAMAP-Rule" id="MF_00382"/>
    </source>
</evidence>
<evidence type="ECO:0000305" key="2"/>
<feature type="chain" id="PRO_0000177124" description="Large ribosomal subunit protein bL20">
    <location>
        <begin position="1"/>
        <end position="119"/>
    </location>
</feature>
<dbReference type="EMBL" id="BX640443">
    <property type="protein sequence ID" value="CAE32535.1"/>
    <property type="molecule type" value="Genomic_DNA"/>
</dbReference>
<dbReference type="RefSeq" id="WP_003812832.1">
    <property type="nucleotide sequence ID" value="NC_002927.3"/>
</dbReference>
<dbReference type="SMR" id="Q7WKR6"/>
<dbReference type="GeneID" id="93204380"/>
<dbReference type="KEGG" id="bbr:BB2039"/>
<dbReference type="eggNOG" id="COG0292">
    <property type="taxonomic scope" value="Bacteria"/>
</dbReference>
<dbReference type="HOGENOM" id="CLU_123265_0_1_4"/>
<dbReference type="Proteomes" id="UP000001027">
    <property type="component" value="Chromosome"/>
</dbReference>
<dbReference type="GO" id="GO:1990904">
    <property type="term" value="C:ribonucleoprotein complex"/>
    <property type="evidence" value="ECO:0007669"/>
    <property type="project" value="UniProtKB-KW"/>
</dbReference>
<dbReference type="GO" id="GO:0005840">
    <property type="term" value="C:ribosome"/>
    <property type="evidence" value="ECO:0007669"/>
    <property type="project" value="UniProtKB-KW"/>
</dbReference>
<dbReference type="GO" id="GO:0019843">
    <property type="term" value="F:rRNA binding"/>
    <property type="evidence" value="ECO:0007669"/>
    <property type="project" value="UniProtKB-UniRule"/>
</dbReference>
<dbReference type="GO" id="GO:0003735">
    <property type="term" value="F:structural constituent of ribosome"/>
    <property type="evidence" value="ECO:0007669"/>
    <property type="project" value="InterPro"/>
</dbReference>
<dbReference type="GO" id="GO:0000027">
    <property type="term" value="P:ribosomal large subunit assembly"/>
    <property type="evidence" value="ECO:0007669"/>
    <property type="project" value="UniProtKB-UniRule"/>
</dbReference>
<dbReference type="GO" id="GO:0006412">
    <property type="term" value="P:translation"/>
    <property type="evidence" value="ECO:0007669"/>
    <property type="project" value="InterPro"/>
</dbReference>
<dbReference type="CDD" id="cd07026">
    <property type="entry name" value="Ribosomal_L20"/>
    <property type="match status" value="1"/>
</dbReference>
<dbReference type="FunFam" id="1.10.1900.20:FF:000001">
    <property type="entry name" value="50S ribosomal protein L20"/>
    <property type="match status" value="1"/>
</dbReference>
<dbReference type="Gene3D" id="6.10.160.10">
    <property type="match status" value="1"/>
</dbReference>
<dbReference type="Gene3D" id="1.10.1900.20">
    <property type="entry name" value="Ribosomal protein L20"/>
    <property type="match status" value="1"/>
</dbReference>
<dbReference type="HAMAP" id="MF_00382">
    <property type="entry name" value="Ribosomal_bL20"/>
    <property type="match status" value="1"/>
</dbReference>
<dbReference type="InterPro" id="IPR005813">
    <property type="entry name" value="Ribosomal_bL20"/>
</dbReference>
<dbReference type="InterPro" id="IPR049946">
    <property type="entry name" value="RIBOSOMAL_L20_CS"/>
</dbReference>
<dbReference type="InterPro" id="IPR035566">
    <property type="entry name" value="Ribosomal_protein_bL20_C"/>
</dbReference>
<dbReference type="NCBIfam" id="TIGR01032">
    <property type="entry name" value="rplT_bact"/>
    <property type="match status" value="1"/>
</dbReference>
<dbReference type="PANTHER" id="PTHR10986">
    <property type="entry name" value="39S RIBOSOMAL PROTEIN L20"/>
    <property type="match status" value="1"/>
</dbReference>
<dbReference type="Pfam" id="PF00453">
    <property type="entry name" value="Ribosomal_L20"/>
    <property type="match status" value="1"/>
</dbReference>
<dbReference type="PRINTS" id="PR00062">
    <property type="entry name" value="RIBOSOMALL20"/>
</dbReference>
<dbReference type="SUPFAM" id="SSF74731">
    <property type="entry name" value="Ribosomal protein L20"/>
    <property type="match status" value="1"/>
</dbReference>
<dbReference type="PROSITE" id="PS00937">
    <property type="entry name" value="RIBOSOMAL_L20"/>
    <property type="match status" value="1"/>
</dbReference>
<comment type="function">
    <text evidence="1">Binds directly to 23S ribosomal RNA and is necessary for the in vitro assembly process of the 50S ribosomal subunit. It is not involved in the protein synthesizing functions of that subunit.</text>
</comment>
<comment type="similarity">
    <text evidence="1">Belongs to the bacterial ribosomal protein bL20 family.</text>
</comment>
<organism>
    <name type="scientific">Bordetella bronchiseptica (strain ATCC BAA-588 / NCTC 13252 / RB50)</name>
    <name type="common">Alcaligenes bronchisepticus</name>
    <dbReference type="NCBI Taxonomy" id="257310"/>
    <lineage>
        <taxon>Bacteria</taxon>
        <taxon>Pseudomonadati</taxon>
        <taxon>Pseudomonadota</taxon>
        <taxon>Betaproteobacteria</taxon>
        <taxon>Burkholderiales</taxon>
        <taxon>Alcaligenaceae</taxon>
        <taxon>Bordetella</taxon>
    </lineage>
</organism>
<reference key="1">
    <citation type="journal article" date="2003" name="Nat. Genet.">
        <title>Comparative analysis of the genome sequences of Bordetella pertussis, Bordetella parapertussis and Bordetella bronchiseptica.</title>
        <authorList>
            <person name="Parkhill J."/>
            <person name="Sebaihia M."/>
            <person name="Preston A."/>
            <person name="Murphy L.D."/>
            <person name="Thomson N.R."/>
            <person name="Harris D.E."/>
            <person name="Holden M.T.G."/>
            <person name="Churcher C.M."/>
            <person name="Bentley S.D."/>
            <person name="Mungall K.L."/>
            <person name="Cerdeno-Tarraga A.-M."/>
            <person name="Temple L."/>
            <person name="James K.D."/>
            <person name="Harris B."/>
            <person name="Quail M.A."/>
            <person name="Achtman M."/>
            <person name="Atkin R."/>
            <person name="Baker S."/>
            <person name="Basham D."/>
            <person name="Bason N."/>
            <person name="Cherevach I."/>
            <person name="Chillingworth T."/>
            <person name="Collins M."/>
            <person name="Cronin A."/>
            <person name="Davis P."/>
            <person name="Doggett J."/>
            <person name="Feltwell T."/>
            <person name="Goble A."/>
            <person name="Hamlin N."/>
            <person name="Hauser H."/>
            <person name="Holroyd S."/>
            <person name="Jagels K."/>
            <person name="Leather S."/>
            <person name="Moule S."/>
            <person name="Norberczak H."/>
            <person name="O'Neil S."/>
            <person name="Ormond D."/>
            <person name="Price C."/>
            <person name="Rabbinowitsch E."/>
            <person name="Rutter S."/>
            <person name="Sanders M."/>
            <person name="Saunders D."/>
            <person name="Seeger K."/>
            <person name="Sharp S."/>
            <person name="Simmonds M."/>
            <person name="Skelton J."/>
            <person name="Squares R."/>
            <person name="Squares S."/>
            <person name="Stevens K."/>
            <person name="Unwin L."/>
            <person name="Whitehead S."/>
            <person name="Barrell B.G."/>
            <person name="Maskell D.J."/>
        </authorList>
    </citation>
    <scope>NUCLEOTIDE SEQUENCE [LARGE SCALE GENOMIC DNA]</scope>
    <source>
        <strain>ATCC BAA-588 / NCTC 13252 / RB50</strain>
    </source>
</reference>
<gene>
    <name evidence="1" type="primary">rplT</name>
    <name type="ordered locus">BB2039</name>
</gene>
<protein>
    <recommendedName>
        <fullName evidence="1">Large ribosomal subunit protein bL20</fullName>
    </recommendedName>
    <alternativeName>
        <fullName evidence="2">50S ribosomal protein L20</fullName>
    </alternativeName>
</protein>
<accession>Q7WKR6</accession>
<sequence length="119" mass="13298">MPRVKRGVTARARHKKVIAAAKGYRGRRGNVFRIAKQAVMRAGQYAYRDRRNKKRTFRALWITRINAAVREQGMSYSVFIAGLKKAAIELDRKVLADLAVRDKAGFAAIVQQAKAALAA</sequence>
<keyword id="KW-0687">Ribonucleoprotein</keyword>
<keyword id="KW-0689">Ribosomal protein</keyword>
<keyword id="KW-0694">RNA-binding</keyword>
<keyword id="KW-0699">rRNA-binding</keyword>